<accession>A3CYL0</accession>
<keyword id="KW-0067">ATP-binding</keyword>
<keyword id="KW-0963">Cytoplasm</keyword>
<keyword id="KW-0547">Nucleotide-binding</keyword>
<keyword id="KW-0548">Nucleotidyltransferase</keyword>
<keyword id="KW-1185">Reference proteome</keyword>
<keyword id="KW-0808">Transferase</keyword>
<keyword id="KW-0819">tRNA processing</keyword>
<name>TSAC_SHEB5</name>
<feature type="chain" id="PRO_0000352975" description="Threonylcarbamoyl-AMP synthase">
    <location>
        <begin position="1"/>
        <end position="188"/>
    </location>
</feature>
<feature type="domain" description="YrdC-like" evidence="1">
    <location>
        <begin position="3"/>
        <end position="188"/>
    </location>
</feature>
<evidence type="ECO:0000255" key="1">
    <source>
        <dbReference type="HAMAP-Rule" id="MF_01852"/>
    </source>
</evidence>
<reference key="1">
    <citation type="submission" date="2007-02" db="EMBL/GenBank/DDBJ databases">
        <title>Complete sequence of chromosome of Shewanella baltica OS155.</title>
        <authorList>
            <consortium name="US DOE Joint Genome Institute"/>
            <person name="Copeland A."/>
            <person name="Lucas S."/>
            <person name="Lapidus A."/>
            <person name="Barry K."/>
            <person name="Detter J.C."/>
            <person name="Glavina del Rio T."/>
            <person name="Hammon N."/>
            <person name="Israni S."/>
            <person name="Dalin E."/>
            <person name="Tice H."/>
            <person name="Pitluck S."/>
            <person name="Sims D.R."/>
            <person name="Brettin T."/>
            <person name="Bruce D."/>
            <person name="Han C."/>
            <person name="Tapia R."/>
            <person name="Brainard J."/>
            <person name="Schmutz J."/>
            <person name="Larimer F."/>
            <person name="Land M."/>
            <person name="Hauser L."/>
            <person name="Kyrpides N."/>
            <person name="Mikhailova N."/>
            <person name="Brettar I."/>
            <person name="Klappenbach J."/>
            <person name="Konstantinidis K."/>
            <person name="Rodrigues J."/>
            <person name="Tiedje J."/>
            <person name="Richardson P."/>
        </authorList>
    </citation>
    <scope>NUCLEOTIDE SEQUENCE [LARGE SCALE GENOMIC DNA]</scope>
    <source>
        <strain>OS155 / ATCC BAA-1091</strain>
    </source>
</reference>
<protein>
    <recommendedName>
        <fullName evidence="1">Threonylcarbamoyl-AMP synthase</fullName>
        <shortName evidence="1">TC-AMP synthase</shortName>
        <ecNumber evidence="1">2.7.7.87</ecNumber>
    </recommendedName>
    <alternativeName>
        <fullName evidence="1">L-threonylcarbamoyladenylate synthase</fullName>
    </alternativeName>
    <alternativeName>
        <fullName evidence="1">t(6)A37 threonylcarbamoyladenosine biosynthesis protein TsaC</fullName>
    </alternativeName>
    <alternativeName>
        <fullName evidence="1">tRNA threonylcarbamoyladenosine biosynthesis protein TsaC</fullName>
    </alternativeName>
</protein>
<gene>
    <name evidence="1" type="primary">tsaC</name>
    <name type="synonym">rimN</name>
    <name type="ordered locus">Sbal_0037</name>
</gene>
<comment type="function">
    <text evidence="1">Required for the formation of a threonylcarbamoyl group on adenosine at position 37 (t(6)A37) in tRNAs that read codons beginning with adenine. Catalyzes the conversion of L-threonine, HCO(3)(-)/CO(2) and ATP to give threonylcarbamoyl-AMP (TC-AMP) as the acyladenylate intermediate, with the release of diphosphate.</text>
</comment>
<comment type="catalytic activity">
    <reaction evidence="1">
        <text>L-threonine + hydrogencarbonate + ATP = L-threonylcarbamoyladenylate + diphosphate + H2O</text>
        <dbReference type="Rhea" id="RHEA:36407"/>
        <dbReference type="ChEBI" id="CHEBI:15377"/>
        <dbReference type="ChEBI" id="CHEBI:17544"/>
        <dbReference type="ChEBI" id="CHEBI:30616"/>
        <dbReference type="ChEBI" id="CHEBI:33019"/>
        <dbReference type="ChEBI" id="CHEBI:57926"/>
        <dbReference type="ChEBI" id="CHEBI:73682"/>
        <dbReference type="EC" id="2.7.7.87"/>
    </reaction>
</comment>
<comment type="subcellular location">
    <subcellularLocation>
        <location evidence="1">Cytoplasm</location>
    </subcellularLocation>
</comment>
<comment type="similarity">
    <text evidence="1">Belongs to the SUA5 family. TsaC subfamily.</text>
</comment>
<dbReference type="EC" id="2.7.7.87" evidence="1"/>
<dbReference type="EMBL" id="CP000563">
    <property type="protein sequence ID" value="ABN59573.1"/>
    <property type="molecule type" value="Genomic_DNA"/>
</dbReference>
<dbReference type="RefSeq" id="WP_011845357.1">
    <property type="nucleotide sequence ID" value="NC_009052.1"/>
</dbReference>
<dbReference type="SMR" id="A3CYL0"/>
<dbReference type="STRING" id="325240.Sbal_0037"/>
<dbReference type="KEGG" id="sbl:Sbal_0037"/>
<dbReference type="HOGENOM" id="CLU_031397_6_0_6"/>
<dbReference type="OrthoDB" id="9814580at2"/>
<dbReference type="Proteomes" id="UP000001557">
    <property type="component" value="Chromosome"/>
</dbReference>
<dbReference type="GO" id="GO:0005737">
    <property type="term" value="C:cytoplasm"/>
    <property type="evidence" value="ECO:0007669"/>
    <property type="project" value="UniProtKB-SubCell"/>
</dbReference>
<dbReference type="GO" id="GO:0005524">
    <property type="term" value="F:ATP binding"/>
    <property type="evidence" value="ECO:0007669"/>
    <property type="project" value="UniProtKB-UniRule"/>
</dbReference>
<dbReference type="GO" id="GO:0003725">
    <property type="term" value="F:double-stranded RNA binding"/>
    <property type="evidence" value="ECO:0007669"/>
    <property type="project" value="InterPro"/>
</dbReference>
<dbReference type="GO" id="GO:0061710">
    <property type="term" value="F:L-threonylcarbamoyladenylate synthase"/>
    <property type="evidence" value="ECO:0007669"/>
    <property type="project" value="UniProtKB-EC"/>
</dbReference>
<dbReference type="GO" id="GO:0000049">
    <property type="term" value="F:tRNA binding"/>
    <property type="evidence" value="ECO:0007669"/>
    <property type="project" value="TreeGrafter"/>
</dbReference>
<dbReference type="GO" id="GO:0006450">
    <property type="term" value="P:regulation of translational fidelity"/>
    <property type="evidence" value="ECO:0007669"/>
    <property type="project" value="TreeGrafter"/>
</dbReference>
<dbReference type="GO" id="GO:0002949">
    <property type="term" value="P:tRNA threonylcarbamoyladenosine modification"/>
    <property type="evidence" value="ECO:0007669"/>
    <property type="project" value="UniProtKB-UniRule"/>
</dbReference>
<dbReference type="FunFam" id="3.90.870.10:FF:000004">
    <property type="entry name" value="Threonylcarbamoyl-AMP synthase"/>
    <property type="match status" value="1"/>
</dbReference>
<dbReference type="Gene3D" id="3.90.870.10">
    <property type="entry name" value="DHBP synthase"/>
    <property type="match status" value="1"/>
</dbReference>
<dbReference type="HAMAP" id="MF_01852">
    <property type="entry name" value="TsaC"/>
    <property type="match status" value="1"/>
</dbReference>
<dbReference type="InterPro" id="IPR017945">
    <property type="entry name" value="DHBP_synth_RibB-like_a/b_dom"/>
</dbReference>
<dbReference type="InterPro" id="IPR006070">
    <property type="entry name" value="Sua5-like_dom"/>
</dbReference>
<dbReference type="InterPro" id="IPR023535">
    <property type="entry name" value="TC-AMP_synthase"/>
</dbReference>
<dbReference type="InterPro" id="IPR050156">
    <property type="entry name" value="TC-AMP_synthase_SUA5"/>
</dbReference>
<dbReference type="NCBIfam" id="TIGR00057">
    <property type="entry name" value="L-threonylcarbamoyladenylate synthase"/>
    <property type="match status" value="1"/>
</dbReference>
<dbReference type="PANTHER" id="PTHR17490">
    <property type="entry name" value="SUA5"/>
    <property type="match status" value="1"/>
</dbReference>
<dbReference type="PANTHER" id="PTHR17490:SF18">
    <property type="entry name" value="THREONYLCARBAMOYL-AMP SYNTHASE"/>
    <property type="match status" value="1"/>
</dbReference>
<dbReference type="Pfam" id="PF01300">
    <property type="entry name" value="Sua5_yciO_yrdC"/>
    <property type="match status" value="1"/>
</dbReference>
<dbReference type="SUPFAM" id="SSF55821">
    <property type="entry name" value="YrdC/RibB"/>
    <property type="match status" value="1"/>
</dbReference>
<dbReference type="PROSITE" id="PS51163">
    <property type="entry name" value="YRDC"/>
    <property type="match status" value="1"/>
</dbReference>
<organism>
    <name type="scientific">Shewanella baltica (strain OS155 / ATCC BAA-1091)</name>
    <dbReference type="NCBI Taxonomy" id="325240"/>
    <lineage>
        <taxon>Bacteria</taxon>
        <taxon>Pseudomonadati</taxon>
        <taxon>Pseudomonadota</taxon>
        <taxon>Gammaproteobacteria</taxon>
        <taxon>Alteromonadales</taxon>
        <taxon>Shewanellaceae</taxon>
        <taxon>Shewanella</taxon>
    </lineage>
</organism>
<proteinExistence type="inferred from homology"/>
<sequence length="188" mass="20304">MLQLHPSDIKDIILQGGVIAYPTEAVYGLGCDPDNDTAIQKLLAVKQRPWQKGLILVASDFQQLLAYVDESQLTAEQLEFAFSKWPGPFTFVMPIKAHVSKYLCGEFDSIAVRVSAHAGVQALCRALNKPLVSTSANLAGEDPALTAAEILADFTGKIDALVLGELGEQRQPSTIIDARSGKILRNGQ</sequence>